<name>SYK_THEVO</name>
<gene>
    <name evidence="1" type="primary">lysS</name>
    <name type="ordered locus">TV1243</name>
    <name type="ORF">TVG1282914</name>
</gene>
<keyword id="KW-0030">Aminoacyl-tRNA synthetase</keyword>
<keyword id="KW-0067">ATP-binding</keyword>
<keyword id="KW-0963">Cytoplasm</keyword>
<keyword id="KW-0436">Ligase</keyword>
<keyword id="KW-0547">Nucleotide-binding</keyword>
<keyword id="KW-0648">Protein biosynthesis</keyword>
<proteinExistence type="inferred from homology"/>
<feature type="chain" id="PRO_0000152763" description="Lysine--tRNA ligase">
    <location>
        <begin position="1"/>
        <end position="503"/>
    </location>
</feature>
<feature type="short sequence motif" description="'HIGH' region">
    <location>
        <begin position="23"/>
        <end position="31"/>
    </location>
</feature>
<feature type="short sequence motif" description="'KMSKS' region">
    <location>
        <begin position="267"/>
        <end position="271"/>
    </location>
</feature>
<reference key="1">
    <citation type="journal article" date="2000" name="Proc. Natl. Acad. Sci. U.S.A.">
        <title>Archaeal adaptation to higher temperatures revealed by genomic sequence of Thermoplasma volcanium.</title>
        <authorList>
            <person name="Kawashima T."/>
            <person name="Amano N."/>
            <person name="Koike H."/>
            <person name="Makino S."/>
            <person name="Higuchi S."/>
            <person name="Kawashima-Ohya Y."/>
            <person name="Watanabe K."/>
            <person name="Yamazaki M."/>
            <person name="Kanehori K."/>
            <person name="Kawamoto T."/>
            <person name="Nunoshiba T."/>
            <person name="Yamamoto Y."/>
            <person name="Aramaki H."/>
            <person name="Makino K."/>
            <person name="Suzuki M."/>
        </authorList>
    </citation>
    <scope>NUCLEOTIDE SEQUENCE [LARGE SCALE GENOMIC DNA]</scope>
    <source>
        <strain>ATCC 51530 / DSM 4299 / JCM 9571 / NBRC 15438 / GSS1</strain>
    </source>
</reference>
<dbReference type="EC" id="6.1.1.6" evidence="1"/>
<dbReference type="EMBL" id="BA000011">
    <property type="protein sequence ID" value="BAB60385.1"/>
    <property type="molecule type" value="Genomic_DNA"/>
</dbReference>
<dbReference type="RefSeq" id="WP_010917477.1">
    <property type="nucleotide sequence ID" value="NC_002689.2"/>
</dbReference>
<dbReference type="SMR" id="Q979B8"/>
<dbReference type="STRING" id="273116.gene:9382048"/>
<dbReference type="PaxDb" id="273116-14325481"/>
<dbReference type="GeneID" id="1441359"/>
<dbReference type="KEGG" id="tvo:TVG1282914"/>
<dbReference type="eggNOG" id="arCOG00485">
    <property type="taxonomic scope" value="Archaea"/>
</dbReference>
<dbReference type="HOGENOM" id="CLU_025562_0_0_2"/>
<dbReference type="OrthoDB" id="6838at2157"/>
<dbReference type="PhylomeDB" id="Q979B8"/>
<dbReference type="Proteomes" id="UP000001017">
    <property type="component" value="Chromosome"/>
</dbReference>
<dbReference type="GO" id="GO:0005737">
    <property type="term" value="C:cytoplasm"/>
    <property type="evidence" value="ECO:0007669"/>
    <property type="project" value="UniProtKB-SubCell"/>
</dbReference>
<dbReference type="GO" id="GO:0005524">
    <property type="term" value="F:ATP binding"/>
    <property type="evidence" value="ECO:0007669"/>
    <property type="project" value="UniProtKB-UniRule"/>
</dbReference>
<dbReference type="GO" id="GO:0004824">
    <property type="term" value="F:lysine-tRNA ligase activity"/>
    <property type="evidence" value="ECO:0007669"/>
    <property type="project" value="UniProtKB-UniRule"/>
</dbReference>
<dbReference type="GO" id="GO:0000049">
    <property type="term" value="F:tRNA binding"/>
    <property type="evidence" value="ECO:0007669"/>
    <property type="project" value="InterPro"/>
</dbReference>
<dbReference type="GO" id="GO:0006430">
    <property type="term" value="P:lysyl-tRNA aminoacylation"/>
    <property type="evidence" value="ECO:0007669"/>
    <property type="project" value="UniProtKB-UniRule"/>
</dbReference>
<dbReference type="Gene3D" id="1.10.10.350">
    <property type="match status" value="1"/>
</dbReference>
<dbReference type="Gene3D" id="1.10.10.770">
    <property type="match status" value="1"/>
</dbReference>
<dbReference type="Gene3D" id="3.40.50.620">
    <property type="entry name" value="HUPs"/>
    <property type="match status" value="2"/>
</dbReference>
<dbReference type="Gene3D" id="6.10.20.10">
    <property type="entry name" value="Lysine tRNA ligase, stem contact fold domain"/>
    <property type="match status" value="1"/>
</dbReference>
<dbReference type="HAMAP" id="MF_00177">
    <property type="entry name" value="Lys_tRNA_synth_class1"/>
    <property type="match status" value="1"/>
</dbReference>
<dbReference type="InterPro" id="IPR045462">
    <property type="entry name" value="aa-tRNA-synth_I_cd-bd"/>
</dbReference>
<dbReference type="InterPro" id="IPR020751">
    <property type="entry name" value="aa-tRNA-synth_I_codon-bd_sub2"/>
</dbReference>
<dbReference type="InterPro" id="IPR001412">
    <property type="entry name" value="aa-tRNA-synth_I_CS"/>
</dbReference>
<dbReference type="InterPro" id="IPR008925">
    <property type="entry name" value="aa_tRNA-synth_I_cd-bd_sf"/>
</dbReference>
<dbReference type="InterPro" id="IPR002904">
    <property type="entry name" value="Lys-tRNA-ligase"/>
</dbReference>
<dbReference type="InterPro" id="IPR042078">
    <property type="entry name" value="Lys-tRNA-ligase_SC_fold"/>
</dbReference>
<dbReference type="InterPro" id="IPR014729">
    <property type="entry name" value="Rossmann-like_a/b/a_fold"/>
</dbReference>
<dbReference type="NCBIfam" id="TIGR00467">
    <property type="entry name" value="lysS_arch"/>
    <property type="match status" value="1"/>
</dbReference>
<dbReference type="PANTHER" id="PTHR37940">
    <property type="entry name" value="LYSINE--TRNA LIGASE"/>
    <property type="match status" value="1"/>
</dbReference>
<dbReference type="PANTHER" id="PTHR37940:SF1">
    <property type="entry name" value="LYSINE--TRNA LIGASE"/>
    <property type="match status" value="1"/>
</dbReference>
<dbReference type="Pfam" id="PF19269">
    <property type="entry name" value="Anticodon_2"/>
    <property type="match status" value="1"/>
</dbReference>
<dbReference type="Pfam" id="PF01921">
    <property type="entry name" value="tRNA-synt_1f"/>
    <property type="match status" value="1"/>
</dbReference>
<dbReference type="SUPFAM" id="SSF48163">
    <property type="entry name" value="An anticodon-binding domain of class I aminoacyl-tRNA synthetases"/>
    <property type="match status" value="1"/>
</dbReference>
<dbReference type="SUPFAM" id="SSF52374">
    <property type="entry name" value="Nucleotidylyl transferase"/>
    <property type="match status" value="1"/>
</dbReference>
<dbReference type="PROSITE" id="PS00178">
    <property type="entry name" value="AA_TRNA_LIGASE_I"/>
    <property type="match status" value="1"/>
</dbReference>
<organism>
    <name type="scientific">Thermoplasma volcanium (strain ATCC 51530 / DSM 4299 / JCM 9571 / NBRC 15438 / GSS1)</name>
    <dbReference type="NCBI Taxonomy" id="273116"/>
    <lineage>
        <taxon>Archaea</taxon>
        <taxon>Methanobacteriati</taxon>
        <taxon>Thermoplasmatota</taxon>
        <taxon>Thermoplasmata</taxon>
        <taxon>Thermoplasmatales</taxon>
        <taxon>Thermoplasmataceae</taxon>
        <taxon>Thermoplasma</taxon>
    </lineage>
</organism>
<sequence length="503" mass="56997">MFWADAAVKDLIGEQRISTGISPSGPIHVGNMREILTGDILYKAVIKRGLKSDFIYLCDDMDPLRKVYPFLDQSYSKYVGFPLKNIPSPDGVGVYSDHFLNPFIEVMRKTGIPARVIKTSDLYGNGILADAIDTVMERRSEIKDILEKITGRMIEGDFYPYEPLCEKCGRINSTSVISYKYPYAEYTCKCGHHGFADIRRAEGKMPWRIEWPAKWYALKVSIEPFGKDHGAPGGSYDTGKRIAREIFGIEPPLPLVYERIMLKGKGAMHSSTGLAIPASEIIDVMPPELLRFLIARVNPSRHIDFDPGLGLLNLFDEFERYLNKYREGDIDGDSKAIIEYSLIEKEKLSYPIDFRHLITLIQIYQKKEDILRAAMASTKDQLDESALYDEIKYAKNWLERYAPDNVKFKLLAIDEKAELSDQDRAILSKFLEVSNSMAWDSNEIHSTVHNVAKDLGIGPDAAFSTFYKVFIGKERGPRLGYFLFNLGKDFTIARIKSVLGGNS</sequence>
<comment type="catalytic activity">
    <reaction evidence="1">
        <text>tRNA(Lys) + L-lysine + ATP = L-lysyl-tRNA(Lys) + AMP + diphosphate</text>
        <dbReference type="Rhea" id="RHEA:20792"/>
        <dbReference type="Rhea" id="RHEA-COMP:9696"/>
        <dbReference type="Rhea" id="RHEA-COMP:9697"/>
        <dbReference type="ChEBI" id="CHEBI:30616"/>
        <dbReference type="ChEBI" id="CHEBI:32551"/>
        <dbReference type="ChEBI" id="CHEBI:33019"/>
        <dbReference type="ChEBI" id="CHEBI:78442"/>
        <dbReference type="ChEBI" id="CHEBI:78529"/>
        <dbReference type="ChEBI" id="CHEBI:456215"/>
        <dbReference type="EC" id="6.1.1.6"/>
    </reaction>
</comment>
<comment type="subcellular location">
    <subcellularLocation>
        <location evidence="1">Cytoplasm</location>
    </subcellularLocation>
</comment>
<comment type="similarity">
    <text evidence="1">Belongs to the class-I aminoacyl-tRNA synthetase family.</text>
</comment>
<accession>Q979B8</accession>
<protein>
    <recommendedName>
        <fullName evidence="1">Lysine--tRNA ligase</fullName>
        <ecNumber evidence="1">6.1.1.6</ecNumber>
    </recommendedName>
    <alternativeName>
        <fullName evidence="1">Lysyl-tRNA synthetase</fullName>
        <shortName evidence="1">LysRS</shortName>
    </alternativeName>
</protein>
<evidence type="ECO:0000255" key="1">
    <source>
        <dbReference type="HAMAP-Rule" id="MF_00177"/>
    </source>
</evidence>